<sequence length="273" mass="30761">MSNRTVFFISDGTGITAETFGNAILAQFEISPRHVRLPFIDTVDKAHQAIRHINHTGELEGKRPIVFTTLVNMDILAVLKAQCNGMLLDMFGIFVAPLESELGIKSNHRVGRFSDASKSKAYDERIEAINFSLAHDDGQSHRDLAGSDVILVGVSRSGKTPTTLYLAMQYGLKASNYPLIPEDFERRQLPPALVPHRKKIFGLTIAPERLSQIRNERRPNSTYSSLANCRNEIHEAEAMMRREGIRWLSTTTKSIEEIATTILQEIRPERLEY</sequence>
<accession>A1VPX9</accession>
<dbReference type="EC" id="2.7.11.33" evidence="1"/>
<dbReference type="EC" id="2.7.4.28" evidence="1"/>
<dbReference type="EMBL" id="CP000529">
    <property type="protein sequence ID" value="ABM37707.1"/>
    <property type="molecule type" value="Genomic_DNA"/>
</dbReference>
<dbReference type="RefSeq" id="WP_011801785.1">
    <property type="nucleotide sequence ID" value="NC_008781.1"/>
</dbReference>
<dbReference type="SMR" id="A1VPX9"/>
<dbReference type="STRING" id="365044.Pnap_2400"/>
<dbReference type="KEGG" id="pna:Pnap_2400"/>
<dbReference type="eggNOG" id="COG1806">
    <property type="taxonomic scope" value="Bacteria"/>
</dbReference>
<dbReference type="HOGENOM" id="CLU_046206_1_0_4"/>
<dbReference type="OrthoDB" id="9782201at2"/>
<dbReference type="Proteomes" id="UP000000644">
    <property type="component" value="Chromosome"/>
</dbReference>
<dbReference type="GO" id="GO:0043531">
    <property type="term" value="F:ADP binding"/>
    <property type="evidence" value="ECO:0007669"/>
    <property type="project" value="UniProtKB-UniRule"/>
</dbReference>
<dbReference type="GO" id="GO:0005524">
    <property type="term" value="F:ATP binding"/>
    <property type="evidence" value="ECO:0007669"/>
    <property type="project" value="InterPro"/>
</dbReference>
<dbReference type="GO" id="GO:0016776">
    <property type="term" value="F:phosphotransferase activity, phosphate group as acceptor"/>
    <property type="evidence" value="ECO:0007669"/>
    <property type="project" value="UniProtKB-UniRule"/>
</dbReference>
<dbReference type="GO" id="GO:0004674">
    <property type="term" value="F:protein serine/threonine kinase activity"/>
    <property type="evidence" value="ECO:0007669"/>
    <property type="project" value="UniProtKB-UniRule"/>
</dbReference>
<dbReference type="HAMAP" id="MF_01062">
    <property type="entry name" value="PSRP"/>
    <property type="match status" value="1"/>
</dbReference>
<dbReference type="InterPro" id="IPR005177">
    <property type="entry name" value="Kinase-pyrophosphorylase"/>
</dbReference>
<dbReference type="InterPro" id="IPR026530">
    <property type="entry name" value="PSRP"/>
</dbReference>
<dbReference type="NCBIfam" id="NF003742">
    <property type="entry name" value="PRK05339.1"/>
    <property type="match status" value="1"/>
</dbReference>
<dbReference type="PANTHER" id="PTHR31756">
    <property type="entry name" value="PYRUVATE, PHOSPHATE DIKINASE REGULATORY PROTEIN 1, CHLOROPLASTIC"/>
    <property type="match status" value="1"/>
</dbReference>
<dbReference type="PANTHER" id="PTHR31756:SF3">
    <property type="entry name" value="PYRUVATE, PHOSPHATE DIKINASE REGULATORY PROTEIN 1, CHLOROPLASTIC"/>
    <property type="match status" value="1"/>
</dbReference>
<dbReference type="Pfam" id="PF03618">
    <property type="entry name" value="Kinase-PPPase"/>
    <property type="match status" value="1"/>
</dbReference>
<keyword id="KW-0418">Kinase</keyword>
<keyword id="KW-0547">Nucleotide-binding</keyword>
<keyword id="KW-1185">Reference proteome</keyword>
<keyword id="KW-0723">Serine/threonine-protein kinase</keyword>
<keyword id="KW-0808">Transferase</keyword>
<reference key="1">
    <citation type="journal article" date="2009" name="Environ. Microbiol.">
        <title>The genome of Polaromonas naphthalenivorans strain CJ2, isolated from coal tar-contaminated sediment, reveals physiological and metabolic versatility and evolution through extensive horizontal gene transfer.</title>
        <authorList>
            <person name="Yagi J.M."/>
            <person name="Sims D."/>
            <person name="Brettin T."/>
            <person name="Bruce D."/>
            <person name="Madsen E.L."/>
        </authorList>
    </citation>
    <scope>NUCLEOTIDE SEQUENCE [LARGE SCALE GENOMIC DNA]</scope>
    <source>
        <strain>CJ2</strain>
    </source>
</reference>
<proteinExistence type="inferred from homology"/>
<name>PSRP_POLNA</name>
<comment type="function">
    <text evidence="1">Bifunctional serine/threonine kinase and phosphorylase involved in the regulation of the phosphoenolpyruvate synthase (PEPS) by catalyzing its phosphorylation/dephosphorylation.</text>
</comment>
<comment type="catalytic activity">
    <reaction evidence="1">
        <text>[pyruvate, water dikinase] + ADP = [pyruvate, water dikinase]-phosphate + AMP + H(+)</text>
        <dbReference type="Rhea" id="RHEA:46020"/>
        <dbReference type="Rhea" id="RHEA-COMP:11425"/>
        <dbReference type="Rhea" id="RHEA-COMP:11426"/>
        <dbReference type="ChEBI" id="CHEBI:15378"/>
        <dbReference type="ChEBI" id="CHEBI:43176"/>
        <dbReference type="ChEBI" id="CHEBI:68546"/>
        <dbReference type="ChEBI" id="CHEBI:456215"/>
        <dbReference type="ChEBI" id="CHEBI:456216"/>
        <dbReference type="EC" id="2.7.11.33"/>
    </reaction>
</comment>
<comment type="catalytic activity">
    <reaction evidence="1">
        <text>[pyruvate, water dikinase]-phosphate + phosphate + H(+) = [pyruvate, water dikinase] + diphosphate</text>
        <dbReference type="Rhea" id="RHEA:48580"/>
        <dbReference type="Rhea" id="RHEA-COMP:11425"/>
        <dbReference type="Rhea" id="RHEA-COMP:11426"/>
        <dbReference type="ChEBI" id="CHEBI:15378"/>
        <dbReference type="ChEBI" id="CHEBI:33019"/>
        <dbReference type="ChEBI" id="CHEBI:43176"/>
        <dbReference type="ChEBI" id="CHEBI:43474"/>
        <dbReference type="ChEBI" id="CHEBI:68546"/>
        <dbReference type="EC" id="2.7.4.28"/>
    </reaction>
</comment>
<comment type="similarity">
    <text evidence="1">Belongs to the pyruvate, phosphate/water dikinase regulatory protein family. PSRP subfamily.</text>
</comment>
<feature type="chain" id="PRO_0000316712" description="Putative phosphoenolpyruvate synthase regulatory protein">
    <location>
        <begin position="1"/>
        <end position="273"/>
    </location>
</feature>
<feature type="binding site" evidence="1">
    <location>
        <begin position="153"/>
        <end position="160"/>
    </location>
    <ligand>
        <name>ADP</name>
        <dbReference type="ChEBI" id="CHEBI:456216"/>
    </ligand>
</feature>
<protein>
    <recommendedName>
        <fullName evidence="1">Putative phosphoenolpyruvate synthase regulatory protein</fullName>
        <shortName evidence="1">PEP synthase regulatory protein</shortName>
        <shortName evidence="1">PSRP</shortName>
        <ecNumber evidence="1">2.7.11.33</ecNumber>
        <ecNumber evidence="1">2.7.4.28</ecNumber>
    </recommendedName>
    <alternativeName>
        <fullName evidence="1">Pyruvate, water dikinase regulatory protein</fullName>
    </alternativeName>
</protein>
<gene>
    <name type="ordered locus">Pnap_2400</name>
</gene>
<organism>
    <name type="scientific">Polaromonas naphthalenivorans (strain CJ2)</name>
    <dbReference type="NCBI Taxonomy" id="365044"/>
    <lineage>
        <taxon>Bacteria</taxon>
        <taxon>Pseudomonadati</taxon>
        <taxon>Pseudomonadota</taxon>
        <taxon>Betaproteobacteria</taxon>
        <taxon>Burkholderiales</taxon>
        <taxon>Comamonadaceae</taxon>
        <taxon>Polaromonas</taxon>
    </lineage>
</organism>
<evidence type="ECO:0000255" key="1">
    <source>
        <dbReference type="HAMAP-Rule" id="MF_01062"/>
    </source>
</evidence>